<name>RS20_FRAT1</name>
<accession>Q14FW0</accession>
<keyword id="KW-0687">Ribonucleoprotein</keyword>
<keyword id="KW-0689">Ribosomal protein</keyword>
<keyword id="KW-0694">RNA-binding</keyword>
<keyword id="KW-0699">rRNA-binding</keyword>
<organism>
    <name type="scientific">Francisella tularensis subsp. tularensis (strain FSC 198)</name>
    <dbReference type="NCBI Taxonomy" id="393115"/>
    <lineage>
        <taxon>Bacteria</taxon>
        <taxon>Pseudomonadati</taxon>
        <taxon>Pseudomonadota</taxon>
        <taxon>Gammaproteobacteria</taxon>
        <taxon>Thiotrichales</taxon>
        <taxon>Francisellaceae</taxon>
        <taxon>Francisella</taxon>
    </lineage>
</organism>
<comment type="function">
    <text evidence="1">Binds directly to 16S ribosomal RNA.</text>
</comment>
<comment type="similarity">
    <text evidence="1">Belongs to the bacterial ribosomal protein bS20 family.</text>
</comment>
<sequence length="90" mass="10117">MANSKQAKKRIIQAERNRQHNVARRSMMRTFLKKTAYAIEKGDVEAAKENFAKVVPILDKYASKGLIHKNKAARHKSRLSAKIKALATAA</sequence>
<gene>
    <name evidence="1" type="primary">rpsT</name>
    <name type="ordered locus">FTF1679</name>
</gene>
<protein>
    <recommendedName>
        <fullName evidence="1">Small ribosomal subunit protein bS20</fullName>
    </recommendedName>
    <alternativeName>
        <fullName evidence="2">30S ribosomal protein S20</fullName>
    </alternativeName>
</protein>
<proteinExistence type="inferred from homology"/>
<evidence type="ECO:0000255" key="1">
    <source>
        <dbReference type="HAMAP-Rule" id="MF_00500"/>
    </source>
</evidence>
<evidence type="ECO:0000305" key="2"/>
<dbReference type="EMBL" id="AM286280">
    <property type="protein sequence ID" value="CAL09695.1"/>
    <property type="molecule type" value="Genomic_DNA"/>
</dbReference>
<dbReference type="RefSeq" id="WP_003017608.1">
    <property type="nucleotide sequence ID" value="NC_008245.1"/>
</dbReference>
<dbReference type="SMR" id="Q14FW0"/>
<dbReference type="GeneID" id="75264396"/>
<dbReference type="KEGG" id="ftf:FTF1679"/>
<dbReference type="HOGENOM" id="CLU_160655_4_0_6"/>
<dbReference type="GO" id="GO:0005829">
    <property type="term" value="C:cytosol"/>
    <property type="evidence" value="ECO:0007669"/>
    <property type="project" value="TreeGrafter"/>
</dbReference>
<dbReference type="GO" id="GO:0015935">
    <property type="term" value="C:small ribosomal subunit"/>
    <property type="evidence" value="ECO:0007669"/>
    <property type="project" value="TreeGrafter"/>
</dbReference>
<dbReference type="GO" id="GO:0070181">
    <property type="term" value="F:small ribosomal subunit rRNA binding"/>
    <property type="evidence" value="ECO:0007669"/>
    <property type="project" value="TreeGrafter"/>
</dbReference>
<dbReference type="GO" id="GO:0003735">
    <property type="term" value="F:structural constituent of ribosome"/>
    <property type="evidence" value="ECO:0007669"/>
    <property type="project" value="InterPro"/>
</dbReference>
<dbReference type="GO" id="GO:0006412">
    <property type="term" value="P:translation"/>
    <property type="evidence" value="ECO:0007669"/>
    <property type="project" value="UniProtKB-UniRule"/>
</dbReference>
<dbReference type="FunFam" id="1.20.58.110:FF:000001">
    <property type="entry name" value="30S ribosomal protein S20"/>
    <property type="match status" value="1"/>
</dbReference>
<dbReference type="Gene3D" id="1.20.58.110">
    <property type="entry name" value="Ribosomal protein S20"/>
    <property type="match status" value="1"/>
</dbReference>
<dbReference type="HAMAP" id="MF_00500">
    <property type="entry name" value="Ribosomal_bS20"/>
    <property type="match status" value="1"/>
</dbReference>
<dbReference type="InterPro" id="IPR002583">
    <property type="entry name" value="Ribosomal_bS20"/>
</dbReference>
<dbReference type="InterPro" id="IPR036510">
    <property type="entry name" value="Ribosomal_bS20_sf"/>
</dbReference>
<dbReference type="NCBIfam" id="TIGR00029">
    <property type="entry name" value="S20"/>
    <property type="match status" value="1"/>
</dbReference>
<dbReference type="PANTHER" id="PTHR33398">
    <property type="entry name" value="30S RIBOSOMAL PROTEIN S20"/>
    <property type="match status" value="1"/>
</dbReference>
<dbReference type="PANTHER" id="PTHR33398:SF1">
    <property type="entry name" value="SMALL RIBOSOMAL SUBUNIT PROTEIN BS20C"/>
    <property type="match status" value="1"/>
</dbReference>
<dbReference type="Pfam" id="PF01649">
    <property type="entry name" value="Ribosomal_S20p"/>
    <property type="match status" value="1"/>
</dbReference>
<dbReference type="SUPFAM" id="SSF46992">
    <property type="entry name" value="Ribosomal protein S20"/>
    <property type="match status" value="1"/>
</dbReference>
<reference key="1">
    <citation type="journal article" date="2007" name="PLoS ONE">
        <title>Genome sequencing shows that European isolates of Francisella tularensis subspecies tularensis are almost identical to US laboratory strain Schu S4.</title>
        <authorList>
            <person name="Chaudhuri R.R."/>
            <person name="Ren C.-P."/>
            <person name="Desmond L."/>
            <person name="Vincent G.A."/>
            <person name="Silman N.J."/>
            <person name="Brehm J.K."/>
            <person name="Elmore M.J."/>
            <person name="Hudson M.J."/>
            <person name="Forsman M."/>
            <person name="Isherwood K.E."/>
            <person name="Gurycova D."/>
            <person name="Minton N.P."/>
            <person name="Titball R.W."/>
            <person name="Pallen M.J."/>
            <person name="Vipond R."/>
        </authorList>
    </citation>
    <scope>NUCLEOTIDE SEQUENCE [LARGE SCALE GENOMIC DNA]</scope>
    <source>
        <strain>FSC 198</strain>
    </source>
</reference>
<feature type="chain" id="PRO_1000014581" description="Small ribosomal subunit protein bS20">
    <location>
        <begin position="1"/>
        <end position="90"/>
    </location>
</feature>